<feature type="chain" id="PRO_0000174615" description="S-adenosylmethionine synthase">
    <location>
        <begin position="1"/>
        <end position="395"/>
    </location>
</feature>
<feature type="region of interest" description="Flexible loop" evidence="1">
    <location>
        <begin position="98"/>
        <end position="108"/>
    </location>
</feature>
<feature type="binding site" description="in other chain" evidence="1">
    <location>
        <position position="14"/>
    </location>
    <ligand>
        <name>ATP</name>
        <dbReference type="ChEBI" id="CHEBI:30616"/>
        <note>ligand shared between two neighboring subunits</note>
    </ligand>
</feature>
<feature type="binding site" evidence="1">
    <location>
        <position position="16"/>
    </location>
    <ligand>
        <name>Mg(2+)</name>
        <dbReference type="ChEBI" id="CHEBI:18420"/>
    </ligand>
</feature>
<feature type="binding site" evidence="1">
    <location>
        <position position="42"/>
    </location>
    <ligand>
        <name>K(+)</name>
        <dbReference type="ChEBI" id="CHEBI:29103"/>
    </ligand>
</feature>
<feature type="binding site" description="in other chain" evidence="1">
    <location>
        <position position="55"/>
    </location>
    <ligand>
        <name>L-methionine</name>
        <dbReference type="ChEBI" id="CHEBI:57844"/>
        <note>ligand shared between two neighboring subunits</note>
    </ligand>
</feature>
<feature type="binding site" description="in other chain" evidence="1">
    <location>
        <position position="98"/>
    </location>
    <ligand>
        <name>L-methionine</name>
        <dbReference type="ChEBI" id="CHEBI:57844"/>
        <note>ligand shared between two neighboring subunits</note>
    </ligand>
</feature>
<feature type="binding site" description="in other chain" evidence="1">
    <location>
        <begin position="174"/>
        <end position="176"/>
    </location>
    <ligand>
        <name>ATP</name>
        <dbReference type="ChEBI" id="CHEBI:30616"/>
        <note>ligand shared between two neighboring subunits</note>
    </ligand>
</feature>
<feature type="binding site" description="in other chain" evidence="1">
    <location>
        <begin position="240"/>
        <end position="241"/>
    </location>
    <ligand>
        <name>ATP</name>
        <dbReference type="ChEBI" id="CHEBI:30616"/>
        <note>ligand shared between two neighboring subunits</note>
    </ligand>
</feature>
<feature type="binding site" evidence="1">
    <location>
        <position position="249"/>
    </location>
    <ligand>
        <name>ATP</name>
        <dbReference type="ChEBI" id="CHEBI:30616"/>
        <note>ligand shared between two neighboring subunits</note>
    </ligand>
</feature>
<feature type="binding site" evidence="1">
    <location>
        <position position="249"/>
    </location>
    <ligand>
        <name>L-methionine</name>
        <dbReference type="ChEBI" id="CHEBI:57844"/>
        <note>ligand shared between two neighboring subunits</note>
    </ligand>
</feature>
<feature type="binding site" description="in other chain" evidence="1">
    <location>
        <begin position="255"/>
        <end position="256"/>
    </location>
    <ligand>
        <name>ATP</name>
        <dbReference type="ChEBI" id="CHEBI:30616"/>
        <note>ligand shared between two neighboring subunits</note>
    </ligand>
</feature>
<feature type="binding site" evidence="1">
    <location>
        <position position="272"/>
    </location>
    <ligand>
        <name>ATP</name>
        <dbReference type="ChEBI" id="CHEBI:30616"/>
        <note>ligand shared between two neighboring subunits</note>
    </ligand>
</feature>
<feature type="binding site" evidence="1">
    <location>
        <position position="276"/>
    </location>
    <ligand>
        <name>ATP</name>
        <dbReference type="ChEBI" id="CHEBI:30616"/>
        <note>ligand shared between two neighboring subunits</note>
    </ligand>
</feature>
<feature type="binding site" description="in other chain" evidence="1">
    <location>
        <position position="280"/>
    </location>
    <ligand>
        <name>L-methionine</name>
        <dbReference type="ChEBI" id="CHEBI:57844"/>
        <note>ligand shared between two neighboring subunits</note>
    </ligand>
</feature>
<dbReference type="EC" id="2.5.1.6" evidence="1"/>
<dbReference type="EMBL" id="AE008691">
    <property type="protein sequence ID" value="AAM23768.1"/>
    <property type="molecule type" value="Genomic_DNA"/>
</dbReference>
<dbReference type="RefSeq" id="WP_011024919.1">
    <property type="nucleotide sequence ID" value="NC_003869.1"/>
</dbReference>
<dbReference type="SMR" id="Q8RCE4"/>
<dbReference type="STRING" id="273068.TTE0488"/>
<dbReference type="KEGG" id="tte:TTE0488"/>
<dbReference type="eggNOG" id="COG0192">
    <property type="taxonomic scope" value="Bacteria"/>
</dbReference>
<dbReference type="HOGENOM" id="CLU_041802_1_1_9"/>
<dbReference type="OrthoDB" id="9801686at2"/>
<dbReference type="UniPathway" id="UPA00315">
    <property type="reaction ID" value="UER00080"/>
</dbReference>
<dbReference type="Proteomes" id="UP000000555">
    <property type="component" value="Chromosome"/>
</dbReference>
<dbReference type="GO" id="GO:0005737">
    <property type="term" value="C:cytoplasm"/>
    <property type="evidence" value="ECO:0007669"/>
    <property type="project" value="UniProtKB-SubCell"/>
</dbReference>
<dbReference type="GO" id="GO:0005524">
    <property type="term" value="F:ATP binding"/>
    <property type="evidence" value="ECO:0007669"/>
    <property type="project" value="UniProtKB-UniRule"/>
</dbReference>
<dbReference type="GO" id="GO:0000287">
    <property type="term" value="F:magnesium ion binding"/>
    <property type="evidence" value="ECO:0007669"/>
    <property type="project" value="UniProtKB-UniRule"/>
</dbReference>
<dbReference type="GO" id="GO:0004478">
    <property type="term" value="F:methionine adenosyltransferase activity"/>
    <property type="evidence" value="ECO:0007669"/>
    <property type="project" value="UniProtKB-UniRule"/>
</dbReference>
<dbReference type="GO" id="GO:0006730">
    <property type="term" value="P:one-carbon metabolic process"/>
    <property type="evidence" value="ECO:0007669"/>
    <property type="project" value="UniProtKB-KW"/>
</dbReference>
<dbReference type="GO" id="GO:0006556">
    <property type="term" value="P:S-adenosylmethionine biosynthetic process"/>
    <property type="evidence" value="ECO:0007669"/>
    <property type="project" value="UniProtKB-UniRule"/>
</dbReference>
<dbReference type="CDD" id="cd18079">
    <property type="entry name" value="S-AdoMet_synt"/>
    <property type="match status" value="1"/>
</dbReference>
<dbReference type="FunFam" id="3.30.300.10:FF:000003">
    <property type="entry name" value="S-adenosylmethionine synthase"/>
    <property type="match status" value="1"/>
</dbReference>
<dbReference type="FunFam" id="3.30.300.10:FF:000004">
    <property type="entry name" value="S-adenosylmethionine synthase"/>
    <property type="match status" value="1"/>
</dbReference>
<dbReference type="Gene3D" id="3.30.300.10">
    <property type="match status" value="3"/>
</dbReference>
<dbReference type="HAMAP" id="MF_00086">
    <property type="entry name" value="S_AdoMet_synth1"/>
    <property type="match status" value="1"/>
</dbReference>
<dbReference type="InterPro" id="IPR022631">
    <property type="entry name" value="ADOMET_SYNTHASE_CS"/>
</dbReference>
<dbReference type="InterPro" id="IPR022630">
    <property type="entry name" value="S-AdoMet_synt_C"/>
</dbReference>
<dbReference type="InterPro" id="IPR022629">
    <property type="entry name" value="S-AdoMet_synt_central"/>
</dbReference>
<dbReference type="InterPro" id="IPR022628">
    <property type="entry name" value="S-AdoMet_synt_N"/>
</dbReference>
<dbReference type="InterPro" id="IPR002133">
    <property type="entry name" value="S-AdoMet_synthetase"/>
</dbReference>
<dbReference type="InterPro" id="IPR022636">
    <property type="entry name" value="S-AdoMet_synthetase_sfam"/>
</dbReference>
<dbReference type="NCBIfam" id="TIGR01034">
    <property type="entry name" value="metK"/>
    <property type="match status" value="1"/>
</dbReference>
<dbReference type="PANTHER" id="PTHR11964">
    <property type="entry name" value="S-ADENOSYLMETHIONINE SYNTHETASE"/>
    <property type="match status" value="1"/>
</dbReference>
<dbReference type="Pfam" id="PF02773">
    <property type="entry name" value="S-AdoMet_synt_C"/>
    <property type="match status" value="1"/>
</dbReference>
<dbReference type="Pfam" id="PF02772">
    <property type="entry name" value="S-AdoMet_synt_M"/>
    <property type="match status" value="1"/>
</dbReference>
<dbReference type="Pfam" id="PF00438">
    <property type="entry name" value="S-AdoMet_synt_N"/>
    <property type="match status" value="1"/>
</dbReference>
<dbReference type="PIRSF" id="PIRSF000497">
    <property type="entry name" value="MAT"/>
    <property type="match status" value="1"/>
</dbReference>
<dbReference type="SUPFAM" id="SSF55973">
    <property type="entry name" value="S-adenosylmethionine synthetase"/>
    <property type="match status" value="3"/>
</dbReference>
<dbReference type="PROSITE" id="PS00376">
    <property type="entry name" value="ADOMET_SYNTHASE_1"/>
    <property type="match status" value="1"/>
</dbReference>
<dbReference type="PROSITE" id="PS00377">
    <property type="entry name" value="ADOMET_SYNTHASE_2"/>
    <property type="match status" value="1"/>
</dbReference>
<accession>Q8RCE4</accession>
<gene>
    <name evidence="1" type="primary">metK</name>
    <name type="ordered locus">TTE0488</name>
</gene>
<name>METK_CALS4</name>
<comment type="function">
    <text evidence="1">Catalyzes the formation of S-adenosylmethionine (AdoMet) from methionine and ATP. The overall synthetic reaction is composed of two sequential steps, AdoMet formation and the subsequent tripolyphosphate hydrolysis which occurs prior to release of AdoMet from the enzyme.</text>
</comment>
<comment type="catalytic activity">
    <reaction evidence="1">
        <text>L-methionine + ATP + H2O = S-adenosyl-L-methionine + phosphate + diphosphate</text>
        <dbReference type="Rhea" id="RHEA:21080"/>
        <dbReference type="ChEBI" id="CHEBI:15377"/>
        <dbReference type="ChEBI" id="CHEBI:30616"/>
        <dbReference type="ChEBI" id="CHEBI:33019"/>
        <dbReference type="ChEBI" id="CHEBI:43474"/>
        <dbReference type="ChEBI" id="CHEBI:57844"/>
        <dbReference type="ChEBI" id="CHEBI:59789"/>
        <dbReference type="EC" id="2.5.1.6"/>
    </reaction>
</comment>
<comment type="cofactor">
    <cofactor evidence="1">
        <name>Mg(2+)</name>
        <dbReference type="ChEBI" id="CHEBI:18420"/>
    </cofactor>
    <text evidence="1">Binds 2 divalent ions per subunit.</text>
</comment>
<comment type="cofactor">
    <cofactor evidence="1">
        <name>K(+)</name>
        <dbReference type="ChEBI" id="CHEBI:29103"/>
    </cofactor>
    <text evidence="1">Binds 1 potassium ion per subunit.</text>
</comment>
<comment type="pathway">
    <text evidence="1">Amino-acid biosynthesis; S-adenosyl-L-methionine biosynthesis; S-adenosyl-L-methionine from L-methionine: step 1/1.</text>
</comment>
<comment type="subunit">
    <text evidence="1">Homotetramer; dimer of dimers.</text>
</comment>
<comment type="subcellular location">
    <subcellularLocation>
        <location evidence="1">Cytoplasm</location>
    </subcellularLocation>
</comment>
<comment type="similarity">
    <text evidence="1">Belongs to the AdoMet synthase family.</text>
</comment>
<evidence type="ECO:0000255" key="1">
    <source>
        <dbReference type="HAMAP-Rule" id="MF_00086"/>
    </source>
</evidence>
<proteinExistence type="inferred from homology"/>
<keyword id="KW-0067">ATP-binding</keyword>
<keyword id="KW-0963">Cytoplasm</keyword>
<keyword id="KW-0460">Magnesium</keyword>
<keyword id="KW-0479">Metal-binding</keyword>
<keyword id="KW-0547">Nucleotide-binding</keyword>
<keyword id="KW-0554">One-carbon metabolism</keyword>
<keyword id="KW-0630">Potassium</keyword>
<keyword id="KW-1185">Reference proteome</keyword>
<keyword id="KW-0808">Transferase</keyword>
<organism>
    <name type="scientific">Caldanaerobacter subterraneus subsp. tengcongensis (strain DSM 15242 / JCM 11007 / NBRC 100824 / MB4)</name>
    <name type="common">Thermoanaerobacter tengcongensis</name>
    <dbReference type="NCBI Taxonomy" id="273068"/>
    <lineage>
        <taxon>Bacteria</taxon>
        <taxon>Bacillati</taxon>
        <taxon>Bacillota</taxon>
        <taxon>Clostridia</taxon>
        <taxon>Thermoanaerobacterales</taxon>
        <taxon>Thermoanaerobacteraceae</taxon>
        <taxon>Caldanaerobacter</taxon>
    </lineage>
</organism>
<protein>
    <recommendedName>
        <fullName evidence="1">S-adenosylmethionine synthase</fullName>
        <shortName evidence="1">AdoMet synthase</shortName>
        <ecNumber evidence="1">2.5.1.6</ecNumber>
    </recommendedName>
    <alternativeName>
        <fullName evidence="1">MAT</fullName>
    </alternativeName>
    <alternativeName>
        <fullName evidence="1">Methionine adenosyltransferase</fullName>
    </alternativeName>
</protein>
<sequence>MRRLFTSESVTEGHPDKICDQISDAILDEILKKDPYARVACETAVTTGLVLVMGEITTECYVDIPRIARDVIRDIGYTRAKYGFDADTCAVITSIDEQSPDIAMGVNKALEARRGELTDAEIEAIGAGDQGLMIGFACDETEELMPMPIMLAHKLARRLAEVRKNGTLSYLRPDGKTQVTVEYEEDRPVRVDSVVVSAQHAPEVDHDTIEKDIIEHVVNVIIPENMMDKNTKIFVNPTGRFVLGGPQADSGLTGRKIIVDTYGGYARHGGGAFSGKDPTKVDRSASYAARYVAKNIVAAGLAKKCEVQVAYAIGVATPLEVEINTFGTGKISDEKISEIVKKVFDLRPAAIIRDLDLRRPIYRQVAAYGHFGRHDLDLPWEKTDRVDILRKLAGI</sequence>
<reference key="1">
    <citation type="journal article" date="2002" name="Genome Res.">
        <title>A complete sequence of the T. tengcongensis genome.</title>
        <authorList>
            <person name="Bao Q."/>
            <person name="Tian Y."/>
            <person name="Li W."/>
            <person name="Xu Z."/>
            <person name="Xuan Z."/>
            <person name="Hu S."/>
            <person name="Dong W."/>
            <person name="Yang J."/>
            <person name="Chen Y."/>
            <person name="Xue Y."/>
            <person name="Xu Y."/>
            <person name="Lai X."/>
            <person name="Huang L."/>
            <person name="Dong X."/>
            <person name="Ma Y."/>
            <person name="Ling L."/>
            <person name="Tan H."/>
            <person name="Chen R."/>
            <person name="Wang J."/>
            <person name="Yu J."/>
            <person name="Yang H."/>
        </authorList>
    </citation>
    <scope>NUCLEOTIDE SEQUENCE [LARGE SCALE GENOMIC DNA]</scope>
    <source>
        <strain>DSM 15242 / JCM 11007 / NBRC 100824 / MB4</strain>
    </source>
</reference>